<dbReference type="EC" id="3.2.1.23" evidence="1"/>
<dbReference type="EMBL" id="CP000305">
    <property type="protein sequence ID" value="ABG18304.1"/>
    <property type="molecule type" value="Genomic_DNA"/>
</dbReference>
<dbReference type="EMBL" id="ACNQ01000011">
    <property type="protein sequence ID" value="EEO76599.1"/>
    <property type="molecule type" value="Genomic_DNA"/>
</dbReference>
<dbReference type="RefSeq" id="WP_002214048.1">
    <property type="nucleotide sequence ID" value="NZ_ACNQ01000011.1"/>
</dbReference>
<dbReference type="SMR" id="Q1CI76"/>
<dbReference type="CAZy" id="GH2">
    <property type="family name" value="Glycoside Hydrolase Family 2"/>
</dbReference>
<dbReference type="KEGG" id="ypn:YPN_1975"/>
<dbReference type="HOGENOM" id="CLU_002346_0_2_6"/>
<dbReference type="Proteomes" id="UP000008936">
    <property type="component" value="Chromosome"/>
</dbReference>
<dbReference type="GO" id="GO:0009341">
    <property type="term" value="C:beta-galactosidase complex"/>
    <property type="evidence" value="ECO:0007669"/>
    <property type="project" value="InterPro"/>
</dbReference>
<dbReference type="GO" id="GO:0004565">
    <property type="term" value="F:beta-galactosidase activity"/>
    <property type="evidence" value="ECO:0007669"/>
    <property type="project" value="UniProtKB-EC"/>
</dbReference>
<dbReference type="GO" id="GO:0030246">
    <property type="term" value="F:carbohydrate binding"/>
    <property type="evidence" value="ECO:0007669"/>
    <property type="project" value="InterPro"/>
</dbReference>
<dbReference type="GO" id="GO:0000287">
    <property type="term" value="F:magnesium ion binding"/>
    <property type="evidence" value="ECO:0007669"/>
    <property type="project" value="UniProtKB-UniRule"/>
</dbReference>
<dbReference type="GO" id="GO:0005990">
    <property type="term" value="P:lactose catabolic process"/>
    <property type="evidence" value="ECO:0007669"/>
    <property type="project" value="TreeGrafter"/>
</dbReference>
<dbReference type="FunFam" id="2.60.120.260:FF:000058">
    <property type="entry name" value="Beta-galactosidase"/>
    <property type="match status" value="1"/>
</dbReference>
<dbReference type="FunFam" id="3.20.20.80:FF:000018">
    <property type="entry name" value="Beta-galactosidase"/>
    <property type="match status" value="1"/>
</dbReference>
<dbReference type="Gene3D" id="2.70.98.10">
    <property type="match status" value="1"/>
</dbReference>
<dbReference type="Gene3D" id="2.60.120.260">
    <property type="entry name" value="Galactose-binding domain-like"/>
    <property type="match status" value="1"/>
</dbReference>
<dbReference type="Gene3D" id="3.20.20.80">
    <property type="entry name" value="Glycosidases"/>
    <property type="match status" value="1"/>
</dbReference>
<dbReference type="Gene3D" id="2.60.40.10">
    <property type="entry name" value="Immunoglobulins"/>
    <property type="match status" value="2"/>
</dbReference>
<dbReference type="HAMAP" id="MF_01687">
    <property type="entry name" value="Beta_gal"/>
    <property type="match status" value="1"/>
</dbReference>
<dbReference type="InterPro" id="IPR004199">
    <property type="entry name" value="B-gal_small/dom_5"/>
</dbReference>
<dbReference type="InterPro" id="IPR050347">
    <property type="entry name" value="Bact_Beta-galactosidase"/>
</dbReference>
<dbReference type="InterPro" id="IPR036156">
    <property type="entry name" value="Beta-gal/glucu_dom_sf"/>
</dbReference>
<dbReference type="InterPro" id="IPR011013">
    <property type="entry name" value="Gal_mutarotase_sf_dom"/>
</dbReference>
<dbReference type="InterPro" id="IPR008979">
    <property type="entry name" value="Galactose-bd-like_sf"/>
</dbReference>
<dbReference type="InterPro" id="IPR014718">
    <property type="entry name" value="GH-type_carb-bd"/>
</dbReference>
<dbReference type="InterPro" id="IPR006101">
    <property type="entry name" value="Glyco_hydro_2"/>
</dbReference>
<dbReference type="InterPro" id="IPR023232">
    <property type="entry name" value="Glyco_hydro_2_AS"/>
</dbReference>
<dbReference type="InterPro" id="IPR023933">
    <property type="entry name" value="Glyco_hydro_2_beta_Galsidase"/>
</dbReference>
<dbReference type="InterPro" id="IPR006103">
    <property type="entry name" value="Glyco_hydro_2_cat"/>
</dbReference>
<dbReference type="InterPro" id="IPR023230">
    <property type="entry name" value="Glyco_hydro_2_CS"/>
</dbReference>
<dbReference type="InterPro" id="IPR006102">
    <property type="entry name" value="Glyco_hydro_2_Ig-like"/>
</dbReference>
<dbReference type="InterPro" id="IPR006104">
    <property type="entry name" value="Glyco_hydro_2_N"/>
</dbReference>
<dbReference type="InterPro" id="IPR017853">
    <property type="entry name" value="Glycoside_hydrolase_SF"/>
</dbReference>
<dbReference type="InterPro" id="IPR013783">
    <property type="entry name" value="Ig-like_fold"/>
</dbReference>
<dbReference type="InterPro" id="IPR032312">
    <property type="entry name" value="LacZ_4"/>
</dbReference>
<dbReference type="NCBIfam" id="NF007074">
    <property type="entry name" value="PRK09525.1"/>
    <property type="match status" value="1"/>
</dbReference>
<dbReference type="PANTHER" id="PTHR46323">
    <property type="entry name" value="BETA-GALACTOSIDASE"/>
    <property type="match status" value="1"/>
</dbReference>
<dbReference type="PANTHER" id="PTHR46323:SF2">
    <property type="entry name" value="BETA-GALACTOSIDASE"/>
    <property type="match status" value="1"/>
</dbReference>
<dbReference type="Pfam" id="PF02929">
    <property type="entry name" value="Bgal_small_N"/>
    <property type="match status" value="1"/>
</dbReference>
<dbReference type="Pfam" id="PF00703">
    <property type="entry name" value="Glyco_hydro_2"/>
    <property type="match status" value="1"/>
</dbReference>
<dbReference type="Pfam" id="PF02836">
    <property type="entry name" value="Glyco_hydro_2_C"/>
    <property type="match status" value="1"/>
</dbReference>
<dbReference type="Pfam" id="PF02837">
    <property type="entry name" value="Glyco_hydro_2_N"/>
    <property type="match status" value="1"/>
</dbReference>
<dbReference type="Pfam" id="PF16353">
    <property type="entry name" value="LacZ_4"/>
    <property type="match status" value="1"/>
</dbReference>
<dbReference type="PRINTS" id="PR00132">
    <property type="entry name" value="GLHYDRLASE2"/>
</dbReference>
<dbReference type="SMART" id="SM01038">
    <property type="entry name" value="Bgal_small_N"/>
    <property type="match status" value="1"/>
</dbReference>
<dbReference type="SUPFAM" id="SSF51445">
    <property type="entry name" value="(Trans)glycosidases"/>
    <property type="match status" value="1"/>
</dbReference>
<dbReference type="SUPFAM" id="SSF49303">
    <property type="entry name" value="beta-Galactosidase/glucuronidase domain"/>
    <property type="match status" value="2"/>
</dbReference>
<dbReference type="SUPFAM" id="SSF74650">
    <property type="entry name" value="Galactose mutarotase-like"/>
    <property type="match status" value="1"/>
</dbReference>
<dbReference type="SUPFAM" id="SSF49785">
    <property type="entry name" value="Galactose-binding domain-like"/>
    <property type="match status" value="1"/>
</dbReference>
<dbReference type="PROSITE" id="PS00719">
    <property type="entry name" value="GLYCOSYL_HYDROL_F2_1"/>
    <property type="match status" value="1"/>
</dbReference>
<dbReference type="PROSITE" id="PS00608">
    <property type="entry name" value="GLYCOSYL_HYDROL_F2_2"/>
    <property type="match status" value="1"/>
</dbReference>
<evidence type="ECO:0000255" key="1">
    <source>
        <dbReference type="HAMAP-Rule" id="MF_01687"/>
    </source>
</evidence>
<reference key="1">
    <citation type="journal article" date="2006" name="J. Bacteriol.">
        <title>Complete genome sequence of Yersinia pestis strains Antiqua and Nepal516: evidence of gene reduction in an emerging pathogen.</title>
        <authorList>
            <person name="Chain P.S.G."/>
            <person name="Hu P."/>
            <person name="Malfatti S.A."/>
            <person name="Radnedge L."/>
            <person name="Larimer F."/>
            <person name="Vergez L.M."/>
            <person name="Worsham P."/>
            <person name="Chu M.C."/>
            <person name="Andersen G.L."/>
        </authorList>
    </citation>
    <scope>NUCLEOTIDE SEQUENCE [LARGE SCALE GENOMIC DNA]</scope>
    <source>
        <strain>Nepal516</strain>
    </source>
</reference>
<reference key="2">
    <citation type="submission" date="2009-04" db="EMBL/GenBank/DDBJ databases">
        <title>Yersinia pestis Nepal516A whole genome shotgun sequencing project.</title>
        <authorList>
            <person name="Plunkett G. III"/>
            <person name="Anderson B.D."/>
            <person name="Baumler D.J."/>
            <person name="Burland V."/>
            <person name="Cabot E.L."/>
            <person name="Glasner J.D."/>
            <person name="Mau B."/>
            <person name="Neeno-Eckwall E."/>
            <person name="Perna N.T."/>
            <person name="Munk A.C."/>
            <person name="Tapia R."/>
            <person name="Green L.D."/>
            <person name="Rogers Y.C."/>
            <person name="Detter J.C."/>
            <person name="Bruce D.C."/>
            <person name="Brettin T.S."/>
        </authorList>
    </citation>
    <scope>NUCLEOTIDE SEQUENCE [LARGE SCALE GENOMIC DNA]</scope>
    <source>
        <strain>Nepal516</strain>
    </source>
</reference>
<sequence length="1060" mass="122625">MTSQEKVPLQVQLSLPQILSRRDWENPQITQYHRLEAHPPFHSWRDVESAQKDRPSPQQQTLNGLWSFSYFTQPEAVPEHWVRCDLAEAKPLPVPANWQLHGYDAPIYTNIQYPIPVNPPRVPDLNPTGCYSRDFTLEPSWLASGKTRIIFDGVSSAFYLWCNGQWVGYSQDSRLPAEFDLTPYLQAGSNRIAVLVLRWSDGSYLEDQDMWRMSGIFRDVKLLHKPEIHLRDIHIMTHLSPEFTSANLEVMAAVNIPSLQLNDPQVTGSYQLRVQLWLADKLVASLQQPLGTQAIDERGPYTDRTQLVLRIDQPLLWSAEQPTLYRAVVSLLNHQQELIEAEAYDVGFRQVAIHQGLLKINGKAVLIRGVNRHEHHPQTGQAIDEESLLQDILLMKQHNFNAVRCSHYPNHPLWYRLCDRYGLYVVDEANIETHGMQPMSRLSDDPSWFSAFSERVTRMVQRDRNHPCIIIWSLGNESGHGATHDALYRWIKTNDPTRPVQYEGGGANTLATDILCPMYARVDEDQPFPAVPKWSIKKWIGLPNESRPLILCEYAHAMGNSFGGFARYWQAFRQYPRLQGGFIWDWVDQSLTHHNDHGQPYWAYGGDFGDTPNDRQFCMNGLVFPDRSPHPSLYEAQCAQQFFQFSLLSTTPLVINITSEYLFRESDNEQLYWRIMLEGESVLEGSQPLNLSPESSQCYRLAEKLPTLNKPGQLWLNVEIRQPKETPWSPAQHRSAWHQWRLPQPLFSPSSDLTNATAHYAPQLQHNLQLQHDLQLQQDEQHIKVTYQQQCWQFSRQTGRLAQWWVADKPMLLRPLQDQFVRAPLDNDIGISEATHIDPNAWVERWKKAGMYQLQQRCLSLHVDHLSHSVQISAEYGYEFEQEPLLHSHWVYRFDRHGRMTIDVNVRIATSLPAPARIGMCCQLADISPTVEWLGLGPHENYPDRQLAAQYGHWSLPLEQMHTAYIFPSENGLRCNTHTLNYGRWTLTGDFHFGISRYSTQQLMVTSHQHLLEPEEGTWLNIDGFHMGVGGDDSWSPSVHIDDILTRETYQYQICWQYKV</sequence>
<proteinExistence type="inferred from homology"/>
<comment type="catalytic activity">
    <reaction evidence="1">
        <text>Hydrolysis of terminal non-reducing beta-D-galactose residues in beta-D-galactosides.</text>
        <dbReference type="EC" id="3.2.1.23"/>
    </reaction>
</comment>
<comment type="cofactor">
    <cofactor evidence="1">
        <name>Mg(2+)</name>
        <dbReference type="ChEBI" id="CHEBI:18420"/>
    </cofactor>
    <text evidence="1">Binds 2 magnesium ions per monomer.</text>
</comment>
<comment type="cofactor">
    <cofactor evidence="1">
        <name>Na(+)</name>
        <dbReference type="ChEBI" id="CHEBI:29101"/>
    </cofactor>
    <text evidence="1">Binds 1 sodium ion per monomer.</text>
</comment>
<comment type="subunit">
    <text evidence="1">Homotetramer.</text>
</comment>
<comment type="similarity">
    <text evidence="1">Belongs to the glycosyl hydrolase 2 family.</text>
</comment>
<gene>
    <name evidence="1" type="primary">lacZ</name>
    <name type="ordered locus">YPN_1975</name>
    <name type="ORF">YP516_2199</name>
</gene>
<name>BGAL_YERPN</name>
<keyword id="KW-0326">Glycosidase</keyword>
<keyword id="KW-0378">Hydrolase</keyword>
<keyword id="KW-0460">Magnesium</keyword>
<keyword id="KW-0479">Metal-binding</keyword>
<keyword id="KW-0915">Sodium</keyword>
<protein>
    <recommendedName>
        <fullName evidence="1">Beta-galactosidase</fullName>
        <shortName evidence="1">Beta-gal</shortName>
        <ecNumber evidence="1">3.2.1.23</ecNumber>
    </recommendedName>
    <alternativeName>
        <fullName evidence="1">Lactase</fullName>
    </alternativeName>
</protein>
<organism>
    <name type="scientific">Yersinia pestis bv. Antiqua (strain Nepal516)</name>
    <dbReference type="NCBI Taxonomy" id="377628"/>
    <lineage>
        <taxon>Bacteria</taxon>
        <taxon>Pseudomonadati</taxon>
        <taxon>Pseudomonadota</taxon>
        <taxon>Gammaproteobacteria</taxon>
        <taxon>Enterobacterales</taxon>
        <taxon>Yersiniaceae</taxon>
        <taxon>Yersinia</taxon>
    </lineage>
</organism>
<feature type="chain" id="PRO_0000367019" description="Beta-galactosidase">
    <location>
        <begin position="1"/>
        <end position="1060"/>
    </location>
</feature>
<feature type="active site" description="Proton donor" evidence="1">
    <location>
        <position position="477"/>
    </location>
</feature>
<feature type="active site" description="Nucleophile" evidence="1">
    <location>
        <position position="553"/>
    </location>
</feature>
<feature type="binding site" evidence="1">
    <location>
        <position position="110"/>
    </location>
    <ligand>
        <name>substrate</name>
    </ligand>
</feature>
<feature type="binding site" evidence="1">
    <location>
        <position position="209"/>
    </location>
    <ligand>
        <name>Na(+)</name>
        <dbReference type="ChEBI" id="CHEBI:29101"/>
    </ligand>
</feature>
<feature type="binding site" evidence="1">
    <location>
        <position position="209"/>
    </location>
    <ligand>
        <name>substrate</name>
    </ligand>
</feature>
<feature type="binding site" evidence="1">
    <location>
        <position position="432"/>
    </location>
    <ligand>
        <name>Mg(2+)</name>
        <dbReference type="ChEBI" id="CHEBI:18420"/>
        <label>1</label>
    </ligand>
</feature>
<feature type="binding site" evidence="1">
    <location>
        <position position="434"/>
    </location>
    <ligand>
        <name>Mg(2+)</name>
        <dbReference type="ChEBI" id="CHEBI:18420"/>
        <label>1</label>
    </ligand>
</feature>
<feature type="binding site" evidence="1">
    <location>
        <position position="477"/>
    </location>
    <ligand>
        <name>Mg(2+)</name>
        <dbReference type="ChEBI" id="CHEBI:18420"/>
        <label>1</label>
    </ligand>
</feature>
<feature type="binding site" evidence="1">
    <location>
        <position position="477"/>
    </location>
    <ligand>
        <name>substrate</name>
    </ligand>
</feature>
<feature type="binding site" evidence="1">
    <location>
        <begin position="553"/>
        <end position="556"/>
    </location>
    <ligand>
        <name>substrate</name>
    </ligand>
</feature>
<feature type="binding site" evidence="1">
    <location>
        <position position="613"/>
    </location>
    <ligand>
        <name>Mg(2+)</name>
        <dbReference type="ChEBI" id="CHEBI:18420"/>
        <label>2</label>
    </ligand>
</feature>
<feature type="binding site" evidence="1">
    <location>
        <position position="617"/>
    </location>
    <ligand>
        <name>Na(+)</name>
        <dbReference type="ChEBI" id="CHEBI:29101"/>
    </ligand>
</feature>
<feature type="binding site" evidence="1">
    <location>
        <position position="620"/>
    </location>
    <ligand>
        <name>Na(+)</name>
        <dbReference type="ChEBI" id="CHEBI:29101"/>
    </ligand>
</feature>
<feature type="binding site" evidence="1">
    <location>
        <position position="620"/>
    </location>
    <ligand>
        <name>substrate</name>
    </ligand>
</feature>
<feature type="binding site" evidence="1">
    <location>
        <position position="1035"/>
    </location>
    <ligand>
        <name>substrate</name>
    </ligand>
</feature>
<feature type="site" description="Transition state stabilizer" evidence="1">
    <location>
        <position position="373"/>
    </location>
</feature>
<feature type="site" description="Transition state stabilizer" evidence="1">
    <location>
        <position position="407"/>
    </location>
</feature>
<accession>Q1CI76</accession>
<accession>C4GTT5</accession>